<name>BEXB3_HAEIF</name>
<dbReference type="EMBL" id="X54987">
    <property type="protein sequence ID" value="CAA38733.1"/>
    <property type="molecule type" value="Genomic_DNA"/>
</dbReference>
<dbReference type="PIR" id="S12234">
    <property type="entry name" value="BWHIXB"/>
</dbReference>
<dbReference type="SMR" id="P22235"/>
<dbReference type="GO" id="GO:0043190">
    <property type="term" value="C:ATP-binding cassette (ABC) transporter complex"/>
    <property type="evidence" value="ECO:0007669"/>
    <property type="project" value="InterPro"/>
</dbReference>
<dbReference type="GO" id="GO:0140359">
    <property type="term" value="F:ABC-type transporter activity"/>
    <property type="evidence" value="ECO:0007669"/>
    <property type="project" value="InterPro"/>
</dbReference>
<dbReference type="GO" id="GO:0015920">
    <property type="term" value="P:lipopolysaccharide transport"/>
    <property type="evidence" value="ECO:0007669"/>
    <property type="project" value="TreeGrafter"/>
</dbReference>
<dbReference type="GO" id="GO:0015774">
    <property type="term" value="P:polysaccharide transport"/>
    <property type="evidence" value="ECO:0007669"/>
    <property type="project" value="UniProtKB-KW"/>
</dbReference>
<dbReference type="InterPro" id="IPR013525">
    <property type="entry name" value="ABC2_TM"/>
</dbReference>
<dbReference type="InterPro" id="IPR047817">
    <property type="entry name" value="ABC2_TM_bact-type"/>
</dbReference>
<dbReference type="InterPro" id="IPR000412">
    <property type="entry name" value="ABC_2_transport"/>
</dbReference>
<dbReference type="PANTHER" id="PTHR30413:SF10">
    <property type="entry name" value="CAPSULE POLYSACCHARIDE EXPORT INNER-MEMBRANE PROTEIN CTRC"/>
    <property type="match status" value="1"/>
</dbReference>
<dbReference type="PANTHER" id="PTHR30413">
    <property type="entry name" value="INNER MEMBRANE TRANSPORT PERMEASE"/>
    <property type="match status" value="1"/>
</dbReference>
<dbReference type="Pfam" id="PF01061">
    <property type="entry name" value="ABC2_membrane"/>
    <property type="match status" value="1"/>
</dbReference>
<dbReference type="PRINTS" id="PR00164">
    <property type="entry name" value="ABC2TRNSPORT"/>
</dbReference>
<dbReference type="PROSITE" id="PS51012">
    <property type="entry name" value="ABC_TM2"/>
    <property type="match status" value="1"/>
</dbReference>
<accession>P22235</accession>
<comment type="function">
    <text>May form an ATP-driven capsule polysaccharide export apparatus, in association with the BexA, BexC and BexD proteins.</text>
</comment>
<comment type="subcellular location">
    <subcellularLocation>
        <location evidence="3">Cell inner membrane</location>
        <topology evidence="3">Multi-pass membrane protein</topology>
    </subcellularLocation>
</comment>
<comment type="similarity">
    <text evidence="3">Belongs to the ABC-2 integral membrane protein family.</text>
</comment>
<proteinExistence type="inferred from homology"/>
<protein>
    <recommendedName>
        <fullName>Capsule polysaccharide export inner-membrane protein BexB</fullName>
    </recommendedName>
</protein>
<sequence length="265" mass="30195">MQYGDKTTFKQSLAIQGRVINALLMREIITRYGRQNIGFFWLFVEPLLMTFFIVMMWKFIRADKFSTLNMIAFVMTGYPMAMMWRNASNRAIGSISANLSLLYHRNVRVLDTIFTRVLLEVAGASIAQILFMAILVMIDWIDAPHDVFYMLIAWFLMAMFAFALGLIICAIAQQFDVFGKIWGTLSFVLLPISGAFFFVHNLPAQAQSIALWFPMIHGTEMFRHGYFGDTVVTYESIGFLVVSDLALLLLGLVMVKNFSKGVEPQ</sequence>
<organism>
    <name type="scientific">Haemophilus influenzae</name>
    <dbReference type="NCBI Taxonomy" id="727"/>
    <lineage>
        <taxon>Bacteria</taxon>
        <taxon>Pseudomonadati</taxon>
        <taxon>Pseudomonadota</taxon>
        <taxon>Gammaproteobacteria</taxon>
        <taxon>Pasteurellales</taxon>
        <taxon>Pasteurellaceae</taxon>
        <taxon>Haemophilus</taxon>
    </lineage>
</organism>
<evidence type="ECO:0000255" key="1"/>
<evidence type="ECO:0000255" key="2">
    <source>
        <dbReference type="PROSITE-ProRule" id="PRU00442"/>
    </source>
</evidence>
<evidence type="ECO:0000305" key="3"/>
<reference key="1">
    <citation type="journal article" date="1990" name="Mol. Microbiol.">
        <title>The bex locus in encapsulated Haemophilus influenzae: a chromosomal region involved in capsule polysaccharide export.</title>
        <authorList>
            <person name="Kroll J.S."/>
            <person name="Loynds B."/>
            <person name="Brophy L.N."/>
            <person name="Moxon E.R."/>
        </authorList>
    </citation>
    <scope>NUCLEOTIDE SEQUENCE [GENOMIC DNA]</scope>
    <source>
        <strain>Eagan / Serotype B</strain>
    </source>
</reference>
<keyword id="KW-0972">Capsule biogenesis/degradation</keyword>
<keyword id="KW-0997">Cell inner membrane</keyword>
<keyword id="KW-1003">Cell membrane</keyword>
<keyword id="KW-0472">Membrane</keyword>
<keyword id="KW-0625">Polysaccharide transport</keyword>
<keyword id="KW-0762">Sugar transport</keyword>
<keyword id="KW-0812">Transmembrane</keyword>
<keyword id="KW-1133">Transmembrane helix</keyword>
<keyword id="KW-0813">Transport</keyword>
<feature type="chain" id="PRO_0000182978" description="Capsule polysaccharide export inner-membrane protein BexB">
    <location>
        <begin position="1"/>
        <end position="265"/>
    </location>
</feature>
<feature type="transmembrane region" description="Helical" evidence="1">
    <location>
        <begin position="37"/>
        <end position="57"/>
    </location>
</feature>
<feature type="transmembrane region" description="Helical" evidence="1">
    <location>
        <begin position="64"/>
        <end position="84"/>
    </location>
</feature>
<feature type="transmembrane region" description="Helical" evidence="1">
    <location>
        <begin position="118"/>
        <end position="138"/>
    </location>
</feature>
<feature type="transmembrane region" description="Helical" evidence="1">
    <location>
        <begin position="151"/>
        <end position="171"/>
    </location>
</feature>
<feature type="transmembrane region" description="Helical" evidence="1">
    <location>
        <begin position="178"/>
        <end position="198"/>
    </location>
</feature>
<feature type="transmembrane region" description="Helical" evidence="1">
    <location>
        <begin position="235"/>
        <end position="255"/>
    </location>
</feature>
<feature type="domain" description="ABC transmembrane type-2" evidence="2">
    <location>
        <begin position="37"/>
        <end position="258"/>
    </location>
</feature>
<gene>
    <name type="primary">bexB</name>
</gene>